<comment type="function">
    <text evidence="3 4">DNA-binding protein that specifically recognizes the sequence 5'-YAAC[GT]G-3'. Component of the DREAM complex, a multiprotein complex that can both act as a transcription activator or repressor depending on the context. In follicle cells, the complex plays a central role in the site-specific DNA replication at the chorion loci. During development, the complex represses transcription of developmentally controlled E2F target genes.</text>
</comment>
<comment type="subunit">
    <text evidence="3 4 5">Component of the DREAM complex at least composed of Myb, Caf1-55, mip40, mip120, mip130, E2f2, Dp, Rbf, Rbf2, lin-52, HDAC1/Rpd3 and l(3)mbt.</text>
</comment>
<comment type="subcellular location">
    <subcellularLocation>
        <location>Nucleus</location>
    </subcellularLocation>
    <subcellularLocation>
        <location>Chromosome</location>
    </subcellularLocation>
</comment>
<protein>
    <recommendedName>
        <fullName>Myb protein</fullName>
    </recommendedName>
</protein>
<sequence length="657" mass="74045">MASASTENGEELMNYGSNSDSEESEYSENEDTQVCDKDSQQNSNADSGYPLDSPELQDSKTTGQKGQNKSGKTSIGAVHPNYGFGKRWSKSEDVLLKQLVETHGENWEIIGPHFKDRLEQQVQQRWAKVLNPELIKGPWTRDEDDMVIKLVRNFGPKKWTLIARYLNGRIGKQCRERWHNHLNPNIKKTAWTEKEDEIIYQAHLELGNQWAKIAKRLPGRTDNAIKNHWNSTMRRKYDVERRSVNASGSDLKSSRTHLITLIKSGGISKCMNNMQHNKESGGEAVNKSENADGASVTAVKGGDLAQESQDDHQKGSNLAHLSMQHLIKLTMPRQTPIILKRTRKHIPETHHQAGCSSSETFNQEEAAGNARSRPPSSPVISPIKSLPFSPSHFLKSPCLTTFEDMDLRASTPVTKVYNRVGMEIKKEMETSSIETPHKSQLGPRTPTPFKKALAAIGKKRDGRRYEPSSPSSLVEDLAEIIHEEHLSNSLTANNSKMMGAADQNSTLSTEYNAQSPPHMKRARKSLLSTWSSNHPYNAGSAKRIQPFETETPSKFLTSPGDILKDTLCSEQDLPFDEGRKENRPFHNRRINKYRGGLTYDHVIDPKWARVACGKSRDQMFMEEQAYACLKNLSCISRSLNFEKQKCLVNSFDRFGSL</sequence>
<reference key="1">
    <citation type="journal article" date="1987" name="EMBO J.">
        <title>Drosophila and vertebrate myb proteins share two conserved regions, one of which functions as a DNA-binding domain.</title>
        <authorList>
            <person name="Peters C.W.B."/>
            <person name="Sippel A.E."/>
            <person name="Vingron M."/>
            <person name="Klempnauer K.-H."/>
        </authorList>
    </citation>
    <scope>NUCLEOTIDE SEQUENCE [MRNA]</scope>
    <source>
        <strain>Oregon-R</strain>
    </source>
</reference>
<reference key="2">
    <citation type="journal article" date="2000" name="Science">
        <title>The genome sequence of Drosophila melanogaster.</title>
        <authorList>
            <person name="Adams M.D."/>
            <person name="Celniker S.E."/>
            <person name="Holt R.A."/>
            <person name="Evans C.A."/>
            <person name="Gocayne J.D."/>
            <person name="Amanatides P.G."/>
            <person name="Scherer S.E."/>
            <person name="Li P.W."/>
            <person name="Hoskins R.A."/>
            <person name="Galle R.F."/>
            <person name="George R.A."/>
            <person name="Lewis S.E."/>
            <person name="Richards S."/>
            <person name="Ashburner M."/>
            <person name="Henderson S.N."/>
            <person name="Sutton G.G."/>
            <person name="Wortman J.R."/>
            <person name="Yandell M.D."/>
            <person name="Zhang Q."/>
            <person name="Chen L.X."/>
            <person name="Brandon R.C."/>
            <person name="Rogers Y.-H.C."/>
            <person name="Blazej R.G."/>
            <person name="Champe M."/>
            <person name="Pfeiffer B.D."/>
            <person name="Wan K.H."/>
            <person name="Doyle C."/>
            <person name="Baxter E.G."/>
            <person name="Helt G."/>
            <person name="Nelson C.R."/>
            <person name="Miklos G.L.G."/>
            <person name="Abril J.F."/>
            <person name="Agbayani A."/>
            <person name="An H.-J."/>
            <person name="Andrews-Pfannkoch C."/>
            <person name="Baldwin D."/>
            <person name="Ballew R.M."/>
            <person name="Basu A."/>
            <person name="Baxendale J."/>
            <person name="Bayraktaroglu L."/>
            <person name="Beasley E.M."/>
            <person name="Beeson K.Y."/>
            <person name="Benos P.V."/>
            <person name="Berman B.P."/>
            <person name="Bhandari D."/>
            <person name="Bolshakov S."/>
            <person name="Borkova D."/>
            <person name="Botchan M.R."/>
            <person name="Bouck J."/>
            <person name="Brokstein P."/>
            <person name="Brottier P."/>
            <person name="Burtis K.C."/>
            <person name="Busam D.A."/>
            <person name="Butler H."/>
            <person name="Cadieu E."/>
            <person name="Center A."/>
            <person name="Chandra I."/>
            <person name="Cherry J.M."/>
            <person name="Cawley S."/>
            <person name="Dahlke C."/>
            <person name="Davenport L.B."/>
            <person name="Davies P."/>
            <person name="de Pablos B."/>
            <person name="Delcher A."/>
            <person name="Deng Z."/>
            <person name="Mays A.D."/>
            <person name="Dew I."/>
            <person name="Dietz S.M."/>
            <person name="Dodson K."/>
            <person name="Doup L.E."/>
            <person name="Downes M."/>
            <person name="Dugan-Rocha S."/>
            <person name="Dunkov B.C."/>
            <person name="Dunn P."/>
            <person name="Durbin K.J."/>
            <person name="Evangelista C.C."/>
            <person name="Ferraz C."/>
            <person name="Ferriera S."/>
            <person name="Fleischmann W."/>
            <person name="Fosler C."/>
            <person name="Gabrielian A.E."/>
            <person name="Garg N.S."/>
            <person name="Gelbart W.M."/>
            <person name="Glasser K."/>
            <person name="Glodek A."/>
            <person name="Gong F."/>
            <person name="Gorrell J.H."/>
            <person name="Gu Z."/>
            <person name="Guan P."/>
            <person name="Harris M."/>
            <person name="Harris N.L."/>
            <person name="Harvey D.A."/>
            <person name="Heiman T.J."/>
            <person name="Hernandez J.R."/>
            <person name="Houck J."/>
            <person name="Hostin D."/>
            <person name="Houston K.A."/>
            <person name="Howland T.J."/>
            <person name="Wei M.-H."/>
            <person name="Ibegwam C."/>
            <person name="Jalali M."/>
            <person name="Kalush F."/>
            <person name="Karpen G.H."/>
            <person name="Ke Z."/>
            <person name="Kennison J.A."/>
            <person name="Ketchum K.A."/>
            <person name="Kimmel B.E."/>
            <person name="Kodira C.D."/>
            <person name="Kraft C.L."/>
            <person name="Kravitz S."/>
            <person name="Kulp D."/>
            <person name="Lai Z."/>
            <person name="Lasko P."/>
            <person name="Lei Y."/>
            <person name="Levitsky A.A."/>
            <person name="Li J.H."/>
            <person name="Li Z."/>
            <person name="Liang Y."/>
            <person name="Lin X."/>
            <person name="Liu X."/>
            <person name="Mattei B."/>
            <person name="McIntosh T.C."/>
            <person name="McLeod M.P."/>
            <person name="McPherson D."/>
            <person name="Merkulov G."/>
            <person name="Milshina N.V."/>
            <person name="Mobarry C."/>
            <person name="Morris J."/>
            <person name="Moshrefi A."/>
            <person name="Mount S.M."/>
            <person name="Moy M."/>
            <person name="Murphy B."/>
            <person name="Murphy L."/>
            <person name="Muzny D.M."/>
            <person name="Nelson D.L."/>
            <person name="Nelson D.R."/>
            <person name="Nelson K.A."/>
            <person name="Nixon K."/>
            <person name="Nusskern D.R."/>
            <person name="Pacleb J.M."/>
            <person name="Palazzolo M."/>
            <person name="Pittman G.S."/>
            <person name="Pan S."/>
            <person name="Pollard J."/>
            <person name="Puri V."/>
            <person name="Reese M.G."/>
            <person name="Reinert K."/>
            <person name="Remington K."/>
            <person name="Saunders R.D.C."/>
            <person name="Scheeler F."/>
            <person name="Shen H."/>
            <person name="Shue B.C."/>
            <person name="Siden-Kiamos I."/>
            <person name="Simpson M."/>
            <person name="Skupski M.P."/>
            <person name="Smith T.J."/>
            <person name="Spier E."/>
            <person name="Spradling A.C."/>
            <person name="Stapleton M."/>
            <person name="Strong R."/>
            <person name="Sun E."/>
            <person name="Svirskas R."/>
            <person name="Tector C."/>
            <person name="Turner R."/>
            <person name="Venter E."/>
            <person name="Wang A.H."/>
            <person name="Wang X."/>
            <person name="Wang Z.-Y."/>
            <person name="Wassarman D.A."/>
            <person name="Weinstock G.M."/>
            <person name="Weissenbach J."/>
            <person name="Williams S.M."/>
            <person name="Woodage T."/>
            <person name="Worley K.C."/>
            <person name="Wu D."/>
            <person name="Yang S."/>
            <person name="Yao Q.A."/>
            <person name="Ye J."/>
            <person name="Yeh R.-F."/>
            <person name="Zaveri J.S."/>
            <person name="Zhan M."/>
            <person name="Zhang G."/>
            <person name="Zhao Q."/>
            <person name="Zheng L."/>
            <person name="Zheng X.H."/>
            <person name="Zhong F.N."/>
            <person name="Zhong W."/>
            <person name="Zhou X."/>
            <person name="Zhu S.C."/>
            <person name="Zhu X."/>
            <person name="Smith H.O."/>
            <person name="Gibbs R.A."/>
            <person name="Myers E.W."/>
            <person name="Rubin G.M."/>
            <person name="Venter J.C."/>
        </authorList>
    </citation>
    <scope>NUCLEOTIDE SEQUENCE [LARGE SCALE GENOMIC DNA]</scope>
    <source>
        <strain>Berkeley</strain>
    </source>
</reference>
<reference key="3">
    <citation type="journal article" date="2002" name="Genome Biol.">
        <title>Annotation of the Drosophila melanogaster euchromatic genome: a systematic review.</title>
        <authorList>
            <person name="Misra S."/>
            <person name="Crosby M.A."/>
            <person name="Mungall C.J."/>
            <person name="Matthews B.B."/>
            <person name="Campbell K.S."/>
            <person name="Hradecky P."/>
            <person name="Huang Y."/>
            <person name="Kaminker J.S."/>
            <person name="Millburn G.H."/>
            <person name="Prochnik S.E."/>
            <person name="Smith C.D."/>
            <person name="Tupy J.L."/>
            <person name="Whitfield E.J."/>
            <person name="Bayraktaroglu L."/>
            <person name="Berman B.P."/>
            <person name="Bettencourt B.R."/>
            <person name="Celniker S.E."/>
            <person name="de Grey A.D.N.J."/>
            <person name="Drysdale R.A."/>
            <person name="Harris N.L."/>
            <person name="Richter J."/>
            <person name="Russo S."/>
            <person name="Schroeder A.J."/>
            <person name="Shu S.Q."/>
            <person name="Stapleton M."/>
            <person name="Yamada C."/>
            <person name="Ashburner M."/>
            <person name="Gelbart W.M."/>
            <person name="Rubin G.M."/>
            <person name="Lewis S.E."/>
        </authorList>
    </citation>
    <scope>GENOME REANNOTATION</scope>
    <source>
        <strain>Berkeley</strain>
    </source>
</reference>
<reference key="4">
    <citation type="journal article" date="1985" name="Cell">
        <title>Isolation of the proto-oncogene c-myb from D. melanogaster.</title>
        <authorList>
            <person name="Katzen A.L."/>
            <person name="Kornberg T.B."/>
            <person name="Bishop J.M."/>
        </authorList>
    </citation>
    <scope>NUCLEOTIDE SEQUENCE [GENOMIC DNA] OF 1-441</scope>
</reference>
<reference key="5">
    <citation type="journal article" date="2002" name="Nature">
        <title>Role for a Drosophila Myb-containing protein complex in site-specific DNA replication.</title>
        <authorList>
            <person name="Beall E.L."/>
            <person name="Manak J.R."/>
            <person name="Zhou S."/>
            <person name="Bell M."/>
            <person name="Lipsick J.S."/>
            <person name="Botchan M.R."/>
        </authorList>
    </citation>
    <scope>FUNCTION</scope>
    <scope>IDENTIFICATION BY MASS SPECTROMETRY</scope>
    <scope>IDENTIFICATION IN THE DREAM COMPLEX</scope>
</reference>
<reference key="6">
    <citation type="journal article" date="2004" name="Cell">
        <title>Native E2F/RBF complexes contain Myb-interacting proteins and repress transcription of developmentally controlled E2F target genes.</title>
        <authorList>
            <person name="Korenjak M."/>
            <person name="Taylor-Harding B."/>
            <person name="Binne U.K."/>
            <person name="Satterlee J.S."/>
            <person name="Stevaux O."/>
            <person name="Aasland R."/>
            <person name="White-Cooper H."/>
            <person name="Dyson N."/>
            <person name="Brehm A."/>
        </authorList>
    </citation>
    <scope>FUNCTION</scope>
    <scope>IDENTIFICATION IN THE DREAM COMPLEX</scope>
</reference>
<reference key="7">
    <citation type="journal article" date="2004" name="Genes Dev.">
        <title>Identification of a Drosophila Myb-E2F2/RBF transcriptional repressor complex.</title>
        <authorList>
            <person name="Lewis P.W."/>
            <person name="Beall E.L."/>
            <person name="Fleischer T.C."/>
            <person name="Georlette D."/>
            <person name="Link A.J."/>
            <person name="Botchan M.R."/>
        </authorList>
    </citation>
    <scope>IDENTIFICATION IN THE DREAM COMPLEX</scope>
</reference>
<reference key="8">
    <citation type="journal article" date="2008" name="J. Proteome Res.">
        <title>Phosphoproteome analysis of Drosophila melanogaster embryos.</title>
        <authorList>
            <person name="Zhai B."/>
            <person name="Villen J."/>
            <person name="Beausoleil S.A."/>
            <person name="Mintseris J."/>
            <person name="Gygi S.P."/>
        </authorList>
    </citation>
    <scope>PHOSPHORYLATION [LARGE SCALE ANALYSIS] AT SER-381; SER-389; SER-396; THR-445; THR-447; THR-557; SER-558; THR-566 AND SER-569</scope>
    <scope>IDENTIFICATION BY MASS SPECTROMETRY</scope>
    <source>
        <tissue>Embryo</tissue>
    </source>
</reference>
<dbReference type="EMBL" id="X05939">
    <property type="protein sequence ID" value="CAA29373.1"/>
    <property type="molecule type" value="mRNA"/>
</dbReference>
<dbReference type="EMBL" id="AE014298">
    <property type="protein sequence ID" value="AAF48529.1"/>
    <property type="molecule type" value="Genomic_DNA"/>
</dbReference>
<dbReference type="EMBL" id="M11281">
    <property type="protein sequence ID" value="AAA70367.1"/>
    <property type="molecule type" value="Genomic_DNA"/>
</dbReference>
<dbReference type="PIR" id="S00578">
    <property type="entry name" value="TVFFMA"/>
</dbReference>
<dbReference type="RefSeq" id="NP_511170.1">
    <property type="nucleotide sequence ID" value="NM_078615.4"/>
</dbReference>
<dbReference type="RefSeq" id="NP_996454.1">
    <property type="nucleotide sequence ID" value="NM_206731.2"/>
</dbReference>
<dbReference type="RefSeq" id="NP_996456.1">
    <property type="nucleotide sequence ID" value="NM_206733.2"/>
</dbReference>
<dbReference type="RefSeq" id="NP_996457.1">
    <property type="nucleotide sequence ID" value="NM_206734.2"/>
</dbReference>
<dbReference type="SMR" id="P04197"/>
<dbReference type="BioGRID" id="58891">
    <property type="interactions" value="38"/>
</dbReference>
<dbReference type="ComplexPortal" id="CPX-2374">
    <property type="entry name" value="drEAM transcriptional repressor complex, Rbf variant"/>
</dbReference>
<dbReference type="ComplexPortal" id="CPX-2376">
    <property type="entry name" value="drEAM transcriptional repressor complex, Rbf2 variant"/>
</dbReference>
<dbReference type="ComplexPortal" id="CPX-2378">
    <property type="entry name" value="Myb-MuvB transcriptional activation complex"/>
</dbReference>
<dbReference type="DIP" id="DIP-22816N"/>
<dbReference type="FunCoup" id="P04197">
    <property type="interactions" value="990"/>
</dbReference>
<dbReference type="IntAct" id="P04197">
    <property type="interactions" value="22"/>
</dbReference>
<dbReference type="MINT" id="P04197"/>
<dbReference type="STRING" id="7227.FBpp0089405"/>
<dbReference type="iPTMnet" id="P04197"/>
<dbReference type="PaxDb" id="7227-FBpp0089402"/>
<dbReference type="DNASU" id="32543"/>
<dbReference type="EnsemblMetazoa" id="FBtr0074169">
    <property type="protein sequence ID" value="FBpp0073961"/>
    <property type="gene ID" value="FBgn0002914"/>
</dbReference>
<dbReference type="EnsemblMetazoa" id="FBtr0074170">
    <property type="protein sequence ID" value="FBpp0089402"/>
    <property type="gene ID" value="FBgn0002914"/>
</dbReference>
<dbReference type="EnsemblMetazoa" id="FBtr0074171">
    <property type="protein sequence ID" value="FBpp0089403"/>
    <property type="gene ID" value="FBgn0002914"/>
</dbReference>
<dbReference type="EnsemblMetazoa" id="FBtr0074173">
    <property type="protein sequence ID" value="FBpp0089405"/>
    <property type="gene ID" value="FBgn0002914"/>
</dbReference>
<dbReference type="GeneID" id="32543"/>
<dbReference type="KEGG" id="dme:Dmel_CG9045"/>
<dbReference type="AGR" id="FB:FBgn0002914"/>
<dbReference type="CTD" id="4602"/>
<dbReference type="FlyBase" id="FBgn0002914">
    <property type="gene designation" value="Myb"/>
</dbReference>
<dbReference type="VEuPathDB" id="VectorBase:FBgn0002914"/>
<dbReference type="eggNOG" id="KOG0048">
    <property type="taxonomic scope" value="Eukaryota"/>
</dbReference>
<dbReference type="HOGENOM" id="CLU_015440_4_1_1"/>
<dbReference type="InParanoid" id="P04197"/>
<dbReference type="OMA" id="KHGENWE"/>
<dbReference type="OrthoDB" id="2143914at2759"/>
<dbReference type="PhylomeDB" id="P04197"/>
<dbReference type="SignaLink" id="P04197"/>
<dbReference type="BioGRID-ORCS" id="32543">
    <property type="hits" value="0 hits in 3 CRISPR screens"/>
</dbReference>
<dbReference type="GenomeRNAi" id="32543"/>
<dbReference type="PRO" id="PR:P04197"/>
<dbReference type="Proteomes" id="UP000000803">
    <property type="component" value="Chromosome X"/>
</dbReference>
<dbReference type="Bgee" id="FBgn0002914">
    <property type="expression patterns" value="Expressed in oviduct (Drosophila) and 175 other cell types or tissues"/>
</dbReference>
<dbReference type="ExpressionAtlas" id="P04197">
    <property type="expression patterns" value="differential"/>
</dbReference>
<dbReference type="GO" id="GO:0070176">
    <property type="term" value="C:DRM complex"/>
    <property type="evidence" value="ECO:0000314"/>
    <property type="project" value="FlyBase"/>
</dbReference>
<dbReference type="GO" id="GO:0000791">
    <property type="term" value="C:euchromatin"/>
    <property type="evidence" value="ECO:0000314"/>
    <property type="project" value="FlyBase"/>
</dbReference>
<dbReference type="GO" id="GO:0031523">
    <property type="term" value="C:Myb complex"/>
    <property type="evidence" value="ECO:0000314"/>
    <property type="project" value="FlyBase"/>
</dbReference>
<dbReference type="GO" id="GO:0005634">
    <property type="term" value="C:nucleus"/>
    <property type="evidence" value="ECO:0000314"/>
    <property type="project" value="FlyBase"/>
</dbReference>
<dbReference type="GO" id="GO:0003677">
    <property type="term" value="F:DNA binding"/>
    <property type="evidence" value="ECO:0000314"/>
    <property type="project" value="FlyBase"/>
</dbReference>
<dbReference type="GO" id="GO:0001228">
    <property type="term" value="F:DNA-binding transcription activator activity, RNA polymerase II-specific"/>
    <property type="evidence" value="ECO:0000314"/>
    <property type="project" value="FlyBase"/>
</dbReference>
<dbReference type="GO" id="GO:0003700">
    <property type="term" value="F:DNA-binding transcription factor activity"/>
    <property type="evidence" value="ECO:0000304"/>
    <property type="project" value="FlyBase"/>
</dbReference>
<dbReference type="GO" id="GO:0000981">
    <property type="term" value="F:DNA-binding transcription factor activity, RNA polymerase II-specific"/>
    <property type="evidence" value="ECO:0000318"/>
    <property type="project" value="GO_Central"/>
</dbReference>
<dbReference type="GO" id="GO:0000978">
    <property type="term" value="F:RNA polymerase II cis-regulatory region sequence-specific DNA binding"/>
    <property type="evidence" value="ECO:0000318"/>
    <property type="project" value="GO_Central"/>
</dbReference>
<dbReference type="GO" id="GO:0007099">
    <property type="term" value="P:centriole replication"/>
    <property type="evidence" value="ECO:0000315"/>
    <property type="project" value="FlyBase"/>
</dbReference>
<dbReference type="GO" id="GO:0007098">
    <property type="term" value="P:centrosome cycle"/>
    <property type="evidence" value="ECO:0000315"/>
    <property type="project" value="FlyBase"/>
</dbReference>
<dbReference type="GO" id="GO:0030261">
    <property type="term" value="P:chromosome condensation"/>
    <property type="evidence" value="ECO:0000315"/>
    <property type="project" value="FlyBase"/>
</dbReference>
<dbReference type="GO" id="GO:0007307">
    <property type="term" value="P:eggshell chorion gene amplification"/>
    <property type="evidence" value="ECO:0000315"/>
    <property type="project" value="FlyBase"/>
</dbReference>
<dbReference type="GO" id="GO:0007030">
    <property type="term" value="P:Golgi organization"/>
    <property type="evidence" value="ECO:0000315"/>
    <property type="project" value="FlyBase"/>
</dbReference>
<dbReference type="GO" id="GO:0000278">
    <property type="term" value="P:mitotic cell cycle"/>
    <property type="evidence" value="ECO:0000314"/>
    <property type="project" value="FlyBase"/>
</dbReference>
<dbReference type="GO" id="GO:0000281">
    <property type="term" value="P:mitotic cytokinesis"/>
    <property type="evidence" value="ECO:0000315"/>
    <property type="project" value="FlyBase"/>
</dbReference>
<dbReference type="GO" id="GO:0045792">
    <property type="term" value="P:negative regulation of cell size"/>
    <property type="evidence" value="ECO:0000315"/>
    <property type="project" value="FlyBase"/>
</dbReference>
<dbReference type="GO" id="GO:0008284">
    <property type="term" value="P:positive regulation of cell population proliferation"/>
    <property type="evidence" value="ECO:0000315"/>
    <property type="project" value="FlyBase"/>
</dbReference>
<dbReference type="GO" id="GO:0010971">
    <property type="term" value="P:positive regulation of G2/M transition of mitotic cell cycle"/>
    <property type="evidence" value="ECO:0000315"/>
    <property type="project" value="FlyBase"/>
</dbReference>
<dbReference type="GO" id="GO:0045931">
    <property type="term" value="P:positive regulation of mitotic cell cycle"/>
    <property type="evidence" value="ECO:0000315"/>
    <property type="project" value="FlyBase"/>
</dbReference>
<dbReference type="GO" id="GO:0045944">
    <property type="term" value="P:positive regulation of transcription by RNA polymerase II"/>
    <property type="evidence" value="ECO:0000315"/>
    <property type="project" value="FlyBase"/>
</dbReference>
<dbReference type="GO" id="GO:0007088">
    <property type="term" value="P:regulation of mitotic nuclear division"/>
    <property type="evidence" value="ECO:0000314"/>
    <property type="project" value="FlyBase"/>
</dbReference>
<dbReference type="GO" id="GO:0007051">
    <property type="term" value="P:spindle organization"/>
    <property type="evidence" value="ECO:0000315"/>
    <property type="project" value="FlyBase"/>
</dbReference>
<dbReference type="CDD" id="cd00167">
    <property type="entry name" value="SANT"/>
    <property type="match status" value="3"/>
</dbReference>
<dbReference type="FunFam" id="1.10.10.60:FF:000502">
    <property type="entry name" value="myb protein"/>
    <property type="match status" value="1"/>
</dbReference>
<dbReference type="FunFam" id="1.10.10.60:FF:000641">
    <property type="entry name" value="myb protein"/>
    <property type="match status" value="1"/>
</dbReference>
<dbReference type="FunFam" id="1.10.10.60:FF:000010">
    <property type="entry name" value="Transcriptional activator Myb isoform A"/>
    <property type="match status" value="1"/>
</dbReference>
<dbReference type="Gene3D" id="1.10.10.60">
    <property type="entry name" value="Homeodomain-like"/>
    <property type="match status" value="3"/>
</dbReference>
<dbReference type="InterPro" id="IPR015395">
    <property type="entry name" value="C-myb_C"/>
</dbReference>
<dbReference type="InterPro" id="IPR009057">
    <property type="entry name" value="Homeodomain-like_sf"/>
</dbReference>
<dbReference type="InterPro" id="IPR017930">
    <property type="entry name" value="Myb_dom"/>
</dbReference>
<dbReference type="InterPro" id="IPR050560">
    <property type="entry name" value="MYB_TF"/>
</dbReference>
<dbReference type="InterPro" id="IPR001005">
    <property type="entry name" value="SANT/Myb"/>
</dbReference>
<dbReference type="PANTHER" id="PTHR45614">
    <property type="entry name" value="MYB PROTEIN-RELATED"/>
    <property type="match status" value="1"/>
</dbReference>
<dbReference type="Pfam" id="PF09316">
    <property type="entry name" value="Cmyb_C"/>
    <property type="match status" value="1"/>
</dbReference>
<dbReference type="Pfam" id="PF13921">
    <property type="entry name" value="Myb_DNA-bind_6"/>
    <property type="match status" value="1"/>
</dbReference>
<dbReference type="Pfam" id="PF00249">
    <property type="entry name" value="Myb_DNA-binding"/>
    <property type="match status" value="1"/>
</dbReference>
<dbReference type="SMART" id="SM00717">
    <property type="entry name" value="SANT"/>
    <property type="match status" value="3"/>
</dbReference>
<dbReference type="SUPFAM" id="SSF46689">
    <property type="entry name" value="Homeodomain-like"/>
    <property type="match status" value="2"/>
</dbReference>
<dbReference type="PROSITE" id="PS51294">
    <property type="entry name" value="HTH_MYB"/>
    <property type="match status" value="2"/>
</dbReference>
<organism>
    <name type="scientific">Drosophila melanogaster</name>
    <name type="common">Fruit fly</name>
    <dbReference type="NCBI Taxonomy" id="7227"/>
    <lineage>
        <taxon>Eukaryota</taxon>
        <taxon>Metazoa</taxon>
        <taxon>Ecdysozoa</taxon>
        <taxon>Arthropoda</taxon>
        <taxon>Hexapoda</taxon>
        <taxon>Insecta</taxon>
        <taxon>Pterygota</taxon>
        <taxon>Neoptera</taxon>
        <taxon>Endopterygota</taxon>
        <taxon>Diptera</taxon>
        <taxon>Brachycera</taxon>
        <taxon>Muscomorpha</taxon>
        <taxon>Ephydroidea</taxon>
        <taxon>Drosophilidae</taxon>
        <taxon>Drosophila</taxon>
        <taxon>Sophophora</taxon>
    </lineage>
</organism>
<keyword id="KW-0010">Activator</keyword>
<keyword id="KW-0158">Chromosome</keyword>
<keyword id="KW-0238">DNA-binding</keyword>
<keyword id="KW-0539">Nucleus</keyword>
<keyword id="KW-0597">Phosphoprotein</keyword>
<keyword id="KW-1185">Reference proteome</keyword>
<keyword id="KW-0677">Repeat</keyword>
<keyword id="KW-0678">Repressor</keyword>
<keyword id="KW-0804">Transcription</keyword>
<keyword id="KW-0805">Transcription regulation</keyword>
<name>MYB_DROME</name>
<proteinExistence type="evidence at protein level"/>
<feature type="chain" id="PRO_0000197052" description="Myb protein">
    <location>
        <begin position="1"/>
        <end position="657"/>
    </location>
</feature>
<feature type="domain" description="HTH myb-type 1" evidence="1">
    <location>
        <begin position="87"/>
        <end position="130"/>
    </location>
</feature>
<feature type="domain" description="HTH myb-type 2" evidence="1">
    <location>
        <begin position="131"/>
        <end position="186"/>
    </location>
</feature>
<feature type="domain" description="HTH myb-type 3" evidence="1">
    <location>
        <begin position="187"/>
        <end position="237"/>
    </location>
</feature>
<feature type="DNA-binding region" description="H-T-H motif" evidence="1">
    <location>
        <begin position="159"/>
        <end position="182"/>
    </location>
</feature>
<feature type="DNA-binding region" description="H-T-H motif" evidence="1">
    <location>
        <begin position="210"/>
        <end position="233"/>
    </location>
</feature>
<feature type="region of interest" description="Disordered" evidence="2">
    <location>
        <begin position="1"/>
        <end position="78"/>
    </location>
</feature>
<feature type="region of interest" description="Disordered" evidence="2">
    <location>
        <begin position="348"/>
        <end position="382"/>
    </location>
</feature>
<feature type="region of interest" description="Disordered" evidence="2">
    <location>
        <begin position="429"/>
        <end position="448"/>
    </location>
</feature>
<feature type="compositionally biased region" description="Acidic residues" evidence="2">
    <location>
        <begin position="20"/>
        <end position="33"/>
    </location>
</feature>
<feature type="compositionally biased region" description="Polar residues" evidence="2">
    <location>
        <begin position="59"/>
        <end position="73"/>
    </location>
</feature>
<feature type="compositionally biased region" description="Polar residues" evidence="2">
    <location>
        <begin position="354"/>
        <end position="363"/>
    </location>
</feature>
<feature type="compositionally biased region" description="Low complexity" evidence="2">
    <location>
        <begin position="371"/>
        <end position="382"/>
    </location>
</feature>
<feature type="modified residue" description="Phosphoserine" evidence="6">
    <location>
        <position position="381"/>
    </location>
</feature>
<feature type="modified residue" description="Phosphoserine" evidence="6">
    <location>
        <position position="389"/>
    </location>
</feature>
<feature type="modified residue" description="Phosphoserine" evidence="6">
    <location>
        <position position="396"/>
    </location>
</feature>
<feature type="modified residue" description="Phosphothreonine" evidence="6">
    <location>
        <position position="445"/>
    </location>
</feature>
<feature type="modified residue" description="Phosphothreonine" evidence="6">
    <location>
        <position position="447"/>
    </location>
</feature>
<feature type="modified residue" description="Phosphothreonine" evidence="6">
    <location>
        <position position="557"/>
    </location>
</feature>
<feature type="modified residue" description="Phosphoserine" evidence="6">
    <location>
        <position position="558"/>
    </location>
</feature>
<feature type="modified residue" description="Phosphothreonine" evidence="6">
    <location>
        <position position="566"/>
    </location>
</feature>
<feature type="modified residue" description="Phosphoserine" evidence="6">
    <location>
        <position position="569"/>
    </location>
</feature>
<feature type="sequence conflict" description="In Ref. 1; CAA29373." evidence="7" ref="1">
    <original>A</original>
    <variation>V</variation>
    <location>
        <position position="370"/>
    </location>
</feature>
<feature type="sequence conflict" description="In Ref. 4; AAA70367." evidence="7" ref="4">
    <original>QL</original>
    <variation>KY</variation>
    <location>
        <begin position="440"/>
        <end position="441"/>
    </location>
</feature>
<evidence type="ECO:0000255" key="1">
    <source>
        <dbReference type="PROSITE-ProRule" id="PRU00625"/>
    </source>
</evidence>
<evidence type="ECO:0000256" key="2">
    <source>
        <dbReference type="SAM" id="MobiDB-lite"/>
    </source>
</evidence>
<evidence type="ECO:0000269" key="3">
    <source>
    </source>
</evidence>
<evidence type="ECO:0000269" key="4">
    <source>
    </source>
</evidence>
<evidence type="ECO:0000269" key="5">
    <source>
    </source>
</evidence>
<evidence type="ECO:0000269" key="6">
    <source>
    </source>
</evidence>
<evidence type="ECO:0000305" key="7"/>
<gene>
    <name type="primary">Myb</name>
    <name type="ORF">CG9045</name>
</gene>
<accession>P04197</accession>
<accession>Q9VXM9</accession>